<gene>
    <name evidence="31" type="primary">GAI</name>
    <name evidence="30" type="synonym">RGA2</name>
    <name evidence="33" type="ordered locus">At1g14920</name>
    <name evidence="34" type="ORF">F10B6.34</name>
</gene>
<keyword id="KW-0002">3D-structure</keyword>
<keyword id="KW-0010">Activator</keyword>
<keyword id="KW-0217">Developmental protein</keyword>
<keyword id="KW-0939">Gibberellin signaling pathway</keyword>
<keyword id="KW-0539">Nucleus</keyword>
<keyword id="KW-0597">Phosphoprotein</keyword>
<keyword id="KW-1185">Reference proteome</keyword>
<keyword id="KW-0678">Repressor</keyword>
<keyword id="KW-0804">Transcription</keyword>
<keyword id="KW-0805">Transcription regulation</keyword>
<keyword id="KW-0832">Ubl conjugation</keyword>
<dbReference type="EMBL" id="Y11337">
    <property type="protein sequence ID" value="CAA72178.1"/>
    <property type="molecule type" value="mRNA"/>
</dbReference>
<dbReference type="EMBL" id="Y15193">
    <property type="protein sequence ID" value="CAA75492.1"/>
    <property type="molecule type" value="Genomic_DNA"/>
</dbReference>
<dbReference type="EMBL" id="AC006917">
    <property type="protein sequence ID" value="AAF79228.1"/>
    <property type="molecule type" value="Genomic_DNA"/>
</dbReference>
<dbReference type="EMBL" id="CP002684">
    <property type="protein sequence ID" value="AEE29242.1"/>
    <property type="molecule type" value="Genomic_DNA"/>
</dbReference>
<dbReference type="EMBL" id="AY058194">
    <property type="protein sequence ID" value="AAL25607.1"/>
    <property type="molecule type" value="mRNA"/>
</dbReference>
<dbReference type="EMBL" id="AY142002">
    <property type="protein sequence ID" value="AAM98266.1"/>
    <property type="molecule type" value="mRNA"/>
</dbReference>
<dbReference type="PIR" id="H86282">
    <property type="entry name" value="H86282"/>
</dbReference>
<dbReference type="RefSeq" id="NP_172945.1">
    <property type="nucleotide sequence ID" value="NM_101361.3"/>
</dbReference>
<dbReference type="PDB" id="2ZSH">
    <property type="method" value="X-ray"/>
    <property type="resolution" value="1.80 A"/>
    <property type="chains" value="B=11-113"/>
</dbReference>
<dbReference type="PDB" id="2ZSI">
    <property type="method" value="X-ray"/>
    <property type="resolution" value="1.80 A"/>
    <property type="chains" value="B=11-113"/>
</dbReference>
<dbReference type="PDBsum" id="2ZSH"/>
<dbReference type="PDBsum" id="2ZSI"/>
<dbReference type="SMR" id="Q9LQT8"/>
<dbReference type="BioGRID" id="23297">
    <property type="interactions" value="136"/>
</dbReference>
<dbReference type="DIP" id="DIP-32985N"/>
<dbReference type="FunCoup" id="Q9LQT8">
    <property type="interactions" value="820"/>
</dbReference>
<dbReference type="IntAct" id="Q9LQT8">
    <property type="interactions" value="72"/>
</dbReference>
<dbReference type="MINT" id="Q9LQT8"/>
<dbReference type="STRING" id="3702.Q9LQT8"/>
<dbReference type="PaxDb" id="3702-AT1G14920.1"/>
<dbReference type="ProteomicsDB" id="247386"/>
<dbReference type="EnsemblPlants" id="AT1G14920.1">
    <property type="protein sequence ID" value="AT1G14920.1"/>
    <property type="gene ID" value="AT1G14920"/>
</dbReference>
<dbReference type="GeneID" id="838057"/>
<dbReference type="Gramene" id="AT1G14920.1">
    <property type="protein sequence ID" value="AT1G14920.1"/>
    <property type="gene ID" value="AT1G14920"/>
</dbReference>
<dbReference type="KEGG" id="ath:AT1G14920"/>
<dbReference type="Araport" id="AT1G14920"/>
<dbReference type="TAIR" id="AT1G14920">
    <property type="gene designation" value="GAI"/>
</dbReference>
<dbReference type="eggNOG" id="ENOG502QPMG">
    <property type="taxonomic scope" value="Eukaryota"/>
</dbReference>
<dbReference type="HOGENOM" id="CLU_011924_4_0_1"/>
<dbReference type="InParanoid" id="Q9LQT8"/>
<dbReference type="OMA" id="SQWRNRF"/>
<dbReference type="PhylomeDB" id="Q9LQT8"/>
<dbReference type="EvolutionaryTrace" id="Q9LQT8"/>
<dbReference type="PRO" id="PR:Q9LQT8"/>
<dbReference type="Proteomes" id="UP000006548">
    <property type="component" value="Chromosome 1"/>
</dbReference>
<dbReference type="ExpressionAtlas" id="Q9LQT8">
    <property type="expression patterns" value="baseline and differential"/>
</dbReference>
<dbReference type="GO" id="GO:0005634">
    <property type="term" value="C:nucleus"/>
    <property type="evidence" value="ECO:0000314"/>
    <property type="project" value="UniProtKB"/>
</dbReference>
<dbReference type="GO" id="GO:0003700">
    <property type="term" value="F:DNA-binding transcription factor activity"/>
    <property type="evidence" value="ECO:0000250"/>
    <property type="project" value="TAIR"/>
</dbReference>
<dbReference type="GO" id="GO:0000976">
    <property type="term" value="F:transcription cis-regulatory region binding"/>
    <property type="evidence" value="ECO:0000353"/>
    <property type="project" value="TAIR"/>
</dbReference>
<dbReference type="GO" id="GO:0003713">
    <property type="term" value="F:transcription coactivator activity"/>
    <property type="evidence" value="ECO:0000314"/>
    <property type="project" value="UniProtKB"/>
</dbReference>
<dbReference type="GO" id="GO:0010336">
    <property type="term" value="P:gibberellic acid homeostasis"/>
    <property type="evidence" value="ECO:0000314"/>
    <property type="project" value="UniProtKB"/>
</dbReference>
<dbReference type="GO" id="GO:0009740">
    <property type="term" value="P:gibberellic acid mediated signaling pathway"/>
    <property type="evidence" value="ECO:0000304"/>
    <property type="project" value="TAIR"/>
</dbReference>
<dbReference type="GO" id="GO:0033206">
    <property type="term" value="P:meiotic cytokinesis"/>
    <property type="evidence" value="ECO:0000315"/>
    <property type="project" value="TAIR"/>
</dbReference>
<dbReference type="GO" id="GO:1905614">
    <property type="term" value="P:negative regulation of developmental vegetative growth"/>
    <property type="evidence" value="ECO:0000316"/>
    <property type="project" value="CAFA"/>
</dbReference>
<dbReference type="GO" id="GO:0010629">
    <property type="term" value="P:negative regulation of gene expression"/>
    <property type="evidence" value="ECO:0000315"/>
    <property type="project" value="CAFA"/>
</dbReference>
<dbReference type="GO" id="GO:0009938">
    <property type="term" value="P:negative regulation of gibberellic acid mediated signaling pathway"/>
    <property type="evidence" value="ECO:0000315"/>
    <property type="project" value="TAIR"/>
</dbReference>
<dbReference type="GO" id="GO:1905622">
    <property type="term" value="P:negative regulation of leaf development"/>
    <property type="evidence" value="ECO:0000316"/>
    <property type="project" value="CAFA"/>
</dbReference>
<dbReference type="GO" id="GO:1900033">
    <property type="term" value="P:negative regulation of trichome patterning"/>
    <property type="evidence" value="ECO:0000316"/>
    <property type="project" value="CAFA"/>
</dbReference>
<dbReference type="GO" id="GO:0010233">
    <property type="term" value="P:phloem transport"/>
    <property type="evidence" value="ECO:0000315"/>
    <property type="project" value="TAIR"/>
</dbReference>
<dbReference type="GO" id="GO:0010628">
    <property type="term" value="P:positive regulation of gene expression"/>
    <property type="evidence" value="ECO:0000316"/>
    <property type="project" value="CAFA"/>
</dbReference>
<dbReference type="GO" id="GO:0009939">
    <property type="term" value="P:positive regulation of gibberellic acid mediated signaling pathway"/>
    <property type="evidence" value="ECO:0000314"/>
    <property type="project" value="UniProtKB"/>
</dbReference>
<dbReference type="GO" id="GO:0045944">
    <property type="term" value="P:positive regulation of transcription by RNA polymerase II"/>
    <property type="evidence" value="ECO:0000314"/>
    <property type="project" value="UniProtKB"/>
</dbReference>
<dbReference type="GO" id="GO:0006808">
    <property type="term" value="P:regulation of nitrogen utilization"/>
    <property type="evidence" value="ECO:0000315"/>
    <property type="project" value="TAIR"/>
</dbReference>
<dbReference type="GO" id="GO:2000033">
    <property type="term" value="P:regulation of seed dormancy process"/>
    <property type="evidence" value="ECO:0000270"/>
    <property type="project" value="UniProtKB"/>
</dbReference>
<dbReference type="GO" id="GO:0010029">
    <property type="term" value="P:regulation of seed germination"/>
    <property type="evidence" value="ECO:0000270"/>
    <property type="project" value="UniProtKB"/>
</dbReference>
<dbReference type="GO" id="GO:0010218">
    <property type="term" value="P:response to far red light"/>
    <property type="evidence" value="ECO:0000270"/>
    <property type="project" value="TAIR"/>
</dbReference>
<dbReference type="GO" id="GO:0009739">
    <property type="term" value="P:response to gibberellin"/>
    <property type="evidence" value="ECO:0000315"/>
    <property type="project" value="CAFA"/>
</dbReference>
<dbReference type="DisProt" id="DP00724"/>
<dbReference type="FunFam" id="1.10.10.1290:FF:000001">
    <property type="entry name" value="DELLA protein GAI"/>
    <property type="match status" value="1"/>
</dbReference>
<dbReference type="Gene3D" id="1.10.10.1290">
    <property type="entry name" value="Transcriptional regulator DELLA, N-terminal domain"/>
    <property type="match status" value="1"/>
</dbReference>
<dbReference type="InterPro" id="IPR038088">
    <property type="entry name" value="DELLA_N_sf"/>
</dbReference>
<dbReference type="InterPro" id="IPR021914">
    <property type="entry name" value="TF_DELLA_N"/>
</dbReference>
<dbReference type="InterPro" id="IPR005202">
    <property type="entry name" value="TF_GRAS"/>
</dbReference>
<dbReference type="PANTHER" id="PTHR31636">
    <property type="entry name" value="OSJNBA0084A10.13 PROTEIN-RELATED"/>
    <property type="match status" value="1"/>
</dbReference>
<dbReference type="Pfam" id="PF12041">
    <property type="entry name" value="DELLA"/>
    <property type="match status" value="1"/>
</dbReference>
<dbReference type="Pfam" id="PF03514">
    <property type="entry name" value="GRAS"/>
    <property type="match status" value="1"/>
</dbReference>
<dbReference type="SMART" id="SM01129">
    <property type="entry name" value="DELLA"/>
    <property type="match status" value="1"/>
</dbReference>
<dbReference type="PROSITE" id="PS50985">
    <property type="entry name" value="GRAS"/>
    <property type="match status" value="1"/>
</dbReference>
<sequence length="533" mass="58927">MKRDHHHHHHQDKKTMMMNEEDDGNGMDELLAVLGYKVRSSEMADVAQKLEQLEVMMSNVQEDDLSQLATETVHYNPAELYTWLDSMLTDLNPPSSNAEYDLKAIPGDAILNQFAIDSASSSNQGGGGDTYTTNKRLKCSNGVVETTTATAESTRHVVLVDSQENGVRLVHALLACAEAVQKENLTVAEALVKQIGFLAVSQIGAMRKVATYFAEALARRIYRLSPSQSPIDHSLSDTLQMHFYETCPYLKFAHFTANQAILEAFQGKKRVHVIDFSMSQGLQWPALMQALALRPGGPPVFRLTGIGPPAPDNFDYLHEVGCKLAHLAEAIHVEFEYRGFVANTLADLDASMLELRPSEIESVAVNSVFELHKLLGRPGAIDKVLGVVNQIKPEIFTVVEQESNHNSPIFLDRFTESLHYYSTLFDSLEGVPSGQDKVMSEVYLGKQICNVVACDGPDRVERHETLSQWRNRFGSAGFAAAHIGSNAFKQASMLLALFNGGEGYRVEESDGCLMLGWHTRPLIATSAWKLSTN</sequence>
<protein>
    <recommendedName>
        <fullName evidence="31">DELLA protein GAI</fullName>
    </recommendedName>
    <alternativeName>
        <fullName>GRAS family protein 3</fullName>
        <shortName>AtGRAS-3</shortName>
    </alternativeName>
    <alternativeName>
        <fullName evidence="31">Gibberellic acid-insensitive mutant protein</fullName>
    </alternativeName>
    <alternativeName>
        <fullName evidence="30">Restoration of growth on ammonia protein 2</fullName>
    </alternativeName>
</protein>
<comment type="function">
    <text evidence="5 6 7 10 11 15 17 20 22 24 27">Transcriptional regulator that acts as a repressor of the gibberellin (GA) signaling pathway. Transcription coactivator of the zinc finger transcription factors GAF1/IDD2 and ENY/IDD1 in regulation of gibberellin homeostasis and signaling (PubMed:25035403). No effect of the BOI proteins on its stability. Probably acts by participating in large multiprotein complexes that repress transcription of GA-inducible genes. Positively regulates XERICO expression. In contrast to RGA, it is less sensitive to GA. Its activity is probably regulated by other phytohormones such as auxin and ethylene. Involved in the regulation of seed dormancy and germination, including glucose-induced delay of seed germination (PubMed:24989044). Involved in the process leading to microtubules (MTs) dissociation in response to gibberellic acid (GA) probably by mediating the translocation of the prefoldin co-chaperone complex from the cytoplasm to the nucleus (PubMed:23583555).</text>
</comment>
<comment type="activity regulation">
    <text evidence="24">Transcription activation is repressed by gibberellic acid GA(3) in the presence of TPR4.</text>
</comment>
<comment type="subunit">
    <text evidence="12 13 14 16 18 19 20 21 22 23 24 25 29">Interacts directly with the GID2/SLY1 component of the SCF(GID2) complex. Interacts (via N-terminus) with GID1A, GID1B and GID1B (via N-terminus). Interacts with the BOI proteins BOI, BRG1, BRG2, BRG3 and NUP58 (PubMed:15155881, PubMed:15161962, PubMed:15173565, PubMed:16709201, PubMed:19037309, PubMed:23482857, PubMed:23840761). Interacts with TOPP4 (PubMed:15155881, PubMed:15161962, PubMed:15173565, PubMed:16709201, PubMed:19037309, PubMed:23482857, PubMed:23840761, PubMed:25010794). Interacts with TCP14 and TCP15 (PubMed:25655823). Interacts with FLZ5 (Ref.27). Binds to and coactivates GAF1/IDD2 and ENY/IDD1 at the promoter of GA20OX2 gene (PubMed:25035403). Binds to PDF2 and ATML1 (PubMed:24989044). Interacts with the prefoldin alpha subunits PFD3 and PFD5 in the nucleus (PubMed:23583555).</text>
</comment>
<comment type="interaction">
    <interactant intactId="EBI-963606">
        <id>Q9LQT8</id>
    </interactant>
    <interactant intactId="EBI-25528007">
        <id>A0A178VU28</id>
        <label>At2g46735</label>
    </interactant>
    <organismsDiffer>false</organismsDiffer>
    <experiments>3</experiments>
</comment>
<comment type="interaction">
    <interactant intactId="EBI-963606">
        <id>Q9LQT8</id>
    </interactant>
    <interactant intactId="EBI-3387100">
        <id>Q9FMT4</id>
        <label>At5g14170</label>
    </interactant>
    <organismsDiffer>false</organismsDiffer>
    <experiments>3</experiments>
</comment>
<comment type="interaction">
    <interactant intactId="EBI-963606">
        <id>Q9LQT8</id>
    </interactant>
    <interactant intactId="EBI-1153783">
        <id>Q38897</id>
        <label>BEL1</label>
    </interactant>
    <organismsDiffer>false</organismsDiffer>
    <experiments>3</experiments>
</comment>
<comment type="interaction">
    <interactant intactId="EBI-963606">
        <id>Q9LQT8</id>
    </interactant>
    <interactant intactId="EBI-1153895">
        <id>Q9FXG8</id>
        <label>BLH10</label>
    </interactant>
    <organismsDiffer>false</organismsDiffer>
    <experiments>3</experiments>
</comment>
<comment type="interaction">
    <interactant intactId="EBI-963606">
        <id>Q9LQT8</id>
    </interactant>
    <interactant intactId="EBI-1153797">
        <id>Q94KL5</id>
        <label>BLH4</label>
    </interactant>
    <organismsDiffer>false</organismsDiffer>
    <experiments>3</experiments>
</comment>
<comment type="interaction">
    <interactant intactId="EBI-963606">
        <id>Q9LQT8</id>
    </interactant>
    <interactant intactId="EBI-942713">
        <id>B9DGI8</id>
        <label>BZIP63</label>
    </interactant>
    <organismsDiffer>false</organismsDiffer>
    <experiments>3</experiments>
</comment>
<comment type="interaction">
    <interactant intactId="EBI-963606">
        <id>Q9LQT8</id>
    </interactant>
    <interactant intactId="EBI-1803261">
        <id>Q8S307</id>
        <label>BZR1</label>
    </interactant>
    <organismsDiffer>false</organismsDiffer>
    <experiments>9</experiments>
</comment>
<comment type="interaction">
    <interactant intactId="EBI-963606">
        <id>Q9LQT8</id>
    </interactant>
    <interactant intactId="EBI-1639724">
        <id>Q39057</id>
        <label>CO</label>
    </interactant>
    <organismsDiffer>false</organismsDiffer>
    <experiments>4</experiments>
</comment>
<comment type="interaction">
    <interactant intactId="EBI-963606">
        <id>Q9LQT8</id>
    </interactant>
    <interactant intactId="EBI-2000137">
        <id>Q9MAI5</id>
        <label>ERF8</label>
    </interactant>
    <organismsDiffer>false</organismsDiffer>
    <experiments>3</experiments>
</comment>
<comment type="interaction">
    <interactant intactId="EBI-963606">
        <id>Q9LQT8</id>
    </interactant>
    <interactant intactId="EBI-963597">
        <id>Q9MAA7</id>
        <label>GID1A</label>
    </interactant>
    <organismsDiffer>false</organismsDiffer>
    <experiments>14</experiments>
</comment>
<comment type="interaction">
    <interactant intactId="EBI-963606">
        <id>Q9LQT8</id>
    </interactant>
    <interactant intactId="EBI-963686">
        <id>Q9LYC1</id>
        <label>GID1B</label>
    </interactant>
    <organismsDiffer>false</organismsDiffer>
    <experiments>8</experiments>
</comment>
<comment type="interaction">
    <interactant intactId="EBI-963606">
        <id>Q9LQT8</id>
    </interactant>
    <interactant intactId="EBI-963794">
        <id>Q940G6</id>
        <label>GID1C</label>
    </interactant>
    <organismsDiffer>false</organismsDiffer>
    <experiments>8</experiments>
</comment>
<comment type="interaction">
    <interactant intactId="EBI-963606">
        <id>Q9LQT8</id>
    </interactant>
    <interactant intactId="EBI-619033">
        <id>Q9STX3</id>
        <label>GID2</label>
    </interactant>
    <organismsDiffer>false</organismsDiffer>
    <experiments>7</experiments>
</comment>
<comment type="interaction">
    <interactant intactId="EBI-963606">
        <id>Q9LQT8</id>
    </interactant>
    <interactant intactId="EBI-1536720">
        <id>Q9SND4</id>
        <label>HEC2</label>
    </interactant>
    <organismsDiffer>false</organismsDiffer>
    <experiments>3</experiments>
</comment>
<comment type="interaction">
    <interactant intactId="EBI-963606">
        <id>Q9LQT8</id>
    </interactant>
    <interactant intactId="EBI-15200782">
        <id>Q9LVW2</id>
        <label>HSFA9</label>
    </interactant>
    <organismsDiffer>false</organismsDiffer>
    <experiments>3</experiments>
</comment>
<comment type="interaction">
    <interactant intactId="EBI-963606">
        <id>Q9LQT8</id>
    </interactant>
    <interactant intactId="EBI-2012188">
        <id>Q8RXD6</id>
        <label>HUB1</label>
    </interactant>
    <organismsDiffer>false</organismsDiffer>
    <experiments>3</experiments>
</comment>
<comment type="interaction">
    <interactant intactId="EBI-963606">
        <id>Q9LQT8</id>
    </interactant>
    <interactant intactId="EBI-4426504">
        <id>Q93WJ9</id>
        <label>KAN1</label>
    </interactant>
    <organismsDiffer>false</organismsDiffer>
    <experiments>3</experiments>
</comment>
<comment type="interaction">
    <interactant intactId="EBI-963606">
        <id>Q9LQT8</id>
    </interactant>
    <interactant intactId="EBI-1153908">
        <id>P48000</id>
        <label>KNAT3</label>
    </interactant>
    <organismsDiffer>false</organismsDiffer>
    <experiments>3</experiments>
</comment>
<comment type="interaction">
    <interactant intactId="EBI-963606">
        <id>Q9LQT8</id>
    </interactant>
    <interactant intactId="EBI-15211238">
        <id>Q9FFJ9</id>
        <label>MJJ3.20</label>
    </interactant>
    <organismsDiffer>false</organismsDiffer>
    <experiments>3</experiments>
</comment>
<comment type="interaction">
    <interactant intactId="EBI-963606">
        <id>Q9LQT8</id>
    </interactant>
    <interactant intactId="EBI-1238534">
        <id>Q9C5C0</id>
        <label>MPK18</label>
    </interactant>
    <organismsDiffer>false</organismsDiffer>
    <experiments>6</experiments>
</comment>
<comment type="interaction">
    <interactant intactId="EBI-963606">
        <id>Q9LQT8</id>
    </interactant>
    <interactant intactId="EBI-2358896">
        <id>Q9SJG9</id>
        <label>MPK20</label>
    </interactant>
    <organismsDiffer>false</organismsDiffer>
    <experiments>3</experiments>
</comment>
<comment type="interaction">
    <interactant intactId="EBI-963606">
        <id>Q9LQT8</id>
    </interactant>
    <interactant intactId="EBI-25511270">
        <id>Q9FX36</id>
        <label>MYB54</label>
    </interactant>
    <organismsDiffer>false</organismsDiffer>
    <experiments>3</experiments>
</comment>
<comment type="interaction">
    <interactant intactId="EBI-963606">
        <id>Q9LQT8</id>
    </interactant>
    <interactant intactId="EBI-541107">
        <id>Q9LUA3</id>
        <label>NIMIN-2</label>
    </interactant>
    <organismsDiffer>false</organismsDiffer>
    <experiments>3</experiments>
</comment>
<comment type="interaction">
    <interactant intactId="EBI-963606">
        <id>Q9LQT8</id>
    </interactant>
    <interactant intactId="EBI-4455937">
        <id>Q9LD95</id>
        <label>SIGF</label>
    </interactant>
    <organismsDiffer>false</organismsDiffer>
    <experiments>4</experiments>
</comment>
<comment type="interaction">
    <interactant intactId="EBI-963606">
        <id>Q9LQT8</id>
    </interactant>
    <interactant intactId="EBI-15206662">
        <id>B9DI20</id>
        <label>SPL13A</label>
    </interactant>
    <organismsDiffer>false</organismsDiffer>
    <experiments>3</experiments>
</comment>
<comment type="interaction">
    <interactant intactId="EBI-963606">
        <id>Q9LQT8</id>
    </interactant>
    <interactant intactId="EBI-1536703">
        <id>Q9FUA4</id>
        <label>SPT</label>
    </interactant>
    <organismsDiffer>false</organismsDiffer>
    <experiments>3</experiments>
</comment>
<comment type="interaction">
    <interactant intactId="EBI-963606">
        <id>Q9LQT8</id>
    </interactant>
    <interactant intactId="EBI-4424877">
        <id>Q9S7W5</id>
        <label>TCP13</label>
    </interactant>
    <organismsDiffer>false</organismsDiffer>
    <experiments>4</experiments>
</comment>
<comment type="interaction">
    <interactant intactId="EBI-963606">
        <id>Q9LQT8</id>
    </interactant>
    <interactant intactId="EBI-4424563">
        <id>Q93Z00</id>
        <label>TCP14</label>
    </interactant>
    <organismsDiffer>false</organismsDiffer>
    <experiments>3</experiments>
</comment>
<comment type="interaction">
    <interactant intactId="EBI-963606">
        <id>Q9LQT8</id>
    </interactant>
    <interactant intactId="EBI-15192327">
        <id>Q9LEZ9</id>
        <label>TCP17</label>
    </interactant>
    <organismsDiffer>false</organismsDiffer>
    <experiments>3</experiments>
</comment>
<comment type="interaction">
    <interactant intactId="EBI-963606">
        <id>Q9LQT8</id>
    </interactant>
    <interactant intactId="EBI-1388539">
        <id>Q9LMA8</id>
        <label>TIFY10A</label>
    </interactant>
    <organismsDiffer>false</organismsDiffer>
    <experiments>5</experiments>
</comment>
<comment type="interaction">
    <interactant intactId="EBI-963606">
        <id>Q9LQT8</id>
    </interactant>
    <interactant intactId="EBI-1792431">
        <id>Q9LVI4</id>
        <label>TIFY6B</label>
    </interactant>
    <organismsDiffer>false</organismsDiffer>
    <experiments>3</experiments>
</comment>
<comment type="interaction">
    <interactant intactId="EBI-963606">
        <id>Q9LQT8</id>
    </interactant>
    <interactant intactId="EBI-1792583">
        <id>Q8W4J8</id>
        <label>TIFY7</label>
    </interactant>
    <organismsDiffer>false</organismsDiffer>
    <experiments>10</experiments>
</comment>
<comment type="subcellular location">
    <subcellularLocation>
        <location evidence="9 20 24">Nucleus</location>
    </subcellularLocation>
</comment>
<comment type="tissue specificity">
    <text evidence="8 26 28">Ubiquitously expressed. Expressed in rosette leaves, roots, stems and inflorescences of greenhouse grown.</text>
</comment>
<comment type="induction">
    <text evidence="22">Upon seed imbibition, increased GA levels in the epidermis reduce DELLA proteins (e.g. GAI/RGA2, RGA/RGA1/GRS and RGL2/SCL19) abundance and release, in turn, ATML1 and PDF2 which activate LIP1 expression, thus enhancing germination potential.</text>
</comment>
<comment type="PTM">
    <text evidence="1">Phosphorylated.</text>
</comment>
<comment type="PTM">
    <text evidence="23">Gibberellin (GA) induces dephosphorylation of GAI by TOPP4 and subsequent degradation by the proteasomal pathway.</text>
</comment>
<comment type="PTM">
    <text>May be ubiquitinated, as suggested by its interaction with GID2. Ubiquitination is however unsure since in contrast to other DELLA proteins, it is not ubiquitinated and degraded upon GA application. Nevertheless, ubiquitination may be triggered by other processes.</text>
</comment>
<comment type="disruption phenotype">
    <text evidence="19">Rga, gai, rgl1, rgl2 and rgl3 pentuple mutant displays constitutive GA responses even in the absence of GA treatment.</text>
</comment>
<comment type="similarity">
    <text evidence="32">Belongs to the GRAS family. DELLA subfamily.</text>
</comment>
<accession>Q9LQT8</accession>
<accession>O23643</accession>
<accession>O23724</accession>
<organism>
    <name type="scientific">Arabidopsis thaliana</name>
    <name type="common">Mouse-ear cress</name>
    <dbReference type="NCBI Taxonomy" id="3702"/>
    <lineage>
        <taxon>Eukaryota</taxon>
        <taxon>Viridiplantae</taxon>
        <taxon>Streptophyta</taxon>
        <taxon>Embryophyta</taxon>
        <taxon>Tracheophyta</taxon>
        <taxon>Spermatophyta</taxon>
        <taxon>Magnoliopsida</taxon>
        <taxon>eudicotyledons</taxon>
        <taxon>Gunneridae</taxon>
        <taxon>Pentapetalae</taxon>
        <taxon>rosids</taxon>
        <taxon>malvids</taxon>
        <taxon>Brassicales</taxon>
        <taxon>Brassicaceae</taxon>
        <taxon>Camelineae</taxon>
        <taxon>Arabidopsis</taxon>
    </lineage>
</organism>
<proteinExistence type="evidence at protein level"/>
<name>GAI_ARATH</name>
<evidence type="ECO:0000250" key="1"/>
<evidence type="ECO:0000255" key="2"/>
<evidence type="ECO:0000255" key="3">
    <source>
        <dbReference type="PROSITE-ProRule" id="PRU01191"/>
    </source>
</evidence>
<evidence type="ECO:0000256" key="4">
    <source>
        <dbReference type="SAM" id="MobiDB-lite"/>
    </source>
</evidence>
<evidence type="ECO:0000269" key="5">
    <source>
    </source>
</evidence>
<evidence type="ECO:0000269" key="6">
    <source>
    </source>
</evidence>
<evidence type="ECO:0000269" key="7">
    <source>
    </source>
</evidence>
<evidence type="ECO:0000269" key="8">
    <source>
    </source>
</evidence>
<evidence type="ECO:0000269" key="9">
    <source>
    </source>
</evidence>
<evidence type="ECO:0000269" key="10">
    <source>
    </source>
</evidence>
<evidence type="ECO:0000269" key="11">
    <source>
    </source>
</evidence>
<evidence type="ECO:0000269" key="12">
    <source>
    </source>
</evidence>
<evidence type="ECO:0000269" key="13">
    <source>
    </source>
</evidence>
<evidence type="ECO:0000269" key="14">
    <source>
    </source>
</evidence>
<evidence type="ECO:0000269" key="15">
    <source>
    </source>
</evidence>
<evidence type="ECO:0000269" key="16">
    <source>
    </source>
</evidence>
<evidence type="ECO:0000269" key="17">
    <source>
    </source>
</evidence>
<evidence type="ECO:0000269" key="18">
    <source>
    </source>
</evidence>
<evidence type="ECO:0000269" key="19">
    <source>
    </source>
</evidence>
<evidence type="ECO:0000269" key="20">
    <source>
    </source>
</evidence>
<evidence type="ECO:0000269" key="21">
    <source>
    </source>
</evidence>
<evidence type="ECO:0000269" key="22">
    <source>
    </source>
</evidence>
<evidence type="ECO:0000269" key="23">
    <source>
    </source>
</evidence>
<evidence type="ECO:0000269" key="24">
    <source>
    </source>
</evidence>
<evidence type="ECO:0000269" key="25">
    <source>
    </source>
</evidence>
<evidence type="ECO:0000269" key="26">
    <source>
    </source>
</evidence>
<evidence type="ECO:0000269" key="27">
    <source>
    </source>
</evidence>
<evidence type="ECO:0000269" key="28">
    <source>
    </source>
</evidence>
<evidence type="ECO:0000269" key="29">
    <source ref="27"/>
</evidence>
<evidence type="ECO:0000303" key="30">
    <source>
    </source>
</evidence>
<evidence type="ECO:0000303" key="31">
    <source>
    </source>
</evidence>
<evidence type="ECO:0000305" key="32"/>
<evidence type="ECO:0000312" key="33">
    <source>
        <dbReference type="Araport" id="AT1G14920"/>
    </source>
</evidence>
<evidence type="ECO:0000312" key="34">
    <source>
        <dbReference type="EMBL" id="AAF79228.1"/>
    </source>
</evidence>
<evidence type="ECO:0007829" key="35">
    <source>
        <dbReference type="PDB" id="2ZSH"/>
    </source>
</evidence>
<feature type="chain" id="PRO_0000132235" description="DELLA protein GAI">
    <location>
        <begin position="1"/>
        <end position="533"/>
    </location>
</feature>
<feature type="domain" description="GRAS" evidence="3">
    <location>
        <begin position="160"/>
        <end position="529"/>
    </location>
</feature>
<feature type="region of interest" description="Disordered" evidence="4">
    <location>
        <begin position="1"/>
        <end position="24"/>
    </location>
</feature>
<feature type="region of interest" description="Leucine repeat I (LRI)" evidence="3">
    <location>
        <begin position="167"/>
        <end position="221"/>
    </location>
</feature>
<feature type="region of interest" description="VHIID" evidence="3">
    <location>
        <begin position="240"/>
        <end position="305"/>
    </location>
</feature>
<feature type="region of interest" description="Leucine repeat II (LRII)" evidence="3">
    <location>
        <begin position="319"/>
        <end position="351"/>
    </location>
</feature>
<feature type="region of interest" description="PFYRE" evidence="3">
    <location>
        <begin position="363"/>
        <end position="450"/>
    </location>
</feature>
<feature type="region of interest" description="SAW" evidence="3">
    <location>
        <begin position="453"/>
        <end position="529"/>
    </location>
</feature>
<feature type="short sequence motif" description="DELLA motif" evidence="2">
    <location>
        <begin position="28"/>
        <end position="32"/>
    </location>
</feature>
<feature type="short sequence motif" description="LEXLE motif" evidence="2">
    <location>
        <begin position="50"/>
        <end position="54"/>
    </location>
</feature>
<feature type="short sequence motif" description="VHYNP motif" evidence="2">
    <location>
        <begin position="73"/>
        <end position="77"/>
    </location>
</feature>
<feature type="short sequence motif" description="LxCxE motif" evidence="3">
    <location>
        <begin position="174"/>
        <end position="178"/>
    </location>
</feature>
<feature type="short sequence motif" description="VHIID" evidence="3">
    <location>
        <begin position="271"/>
        <end position="275"/>
    </location>
</feature>
<feature type="short sequence motif" description="LXXLL motif" evidence="3">
    <location>
        <begin position="371"/>
        <end position="375"/>
    </location>
</feature>
<feature type="compositionally biased region" description="Basic residues" evidence="4">
    <location>
        <begin position="1"/>
        <end position="12"/>
    </location>
</feature>
<feature type="mutagenesis site" description="In gai; causes a dwarf phenotype." evidence="27">
    <location>
        <begin position="28"/>
        <end position="44"/>
    </location>
</feature>
<feature type="mutagenesis site" description="Does not affect nuclear localization." evidence="9">
    <location>
        <begin position="135"/>
        <end position="138"/>
    </location>
</feature>
<feature type="mutagenesis site" description="Does not affect nuclear localization." evidence="9">
    <location>
        <begin position="219"/>
        <end position="223"/>
    </location>
</feature>
<feature type="sequence conflict" description="In Ref. 1; CAA72178 and 2; CAA75492." evidence="32" ref="1 2">
    <location>
        <position position="10"/>
    </location>
</feature>
<feature type="sequence conflict" description="In Ref. 1; CAA72178." evidence="32" ref="1">
    <original>K</original>
    <variation>Q</variation>
    <location>
        <position position="208"/>
    </location>
</feature>
<feature type="helix" evidence="35">
    <location>
        <begin position="29"/>
        <end position="32"/>
    </location>
</feature>
<feature type="turn" evidence="35">
    <location>
        <begin position="33"/>
        <end position="35"/>
    </location>
</feature>
<feature type="helix" evidence="35">
    <location>
        <begin position="40"/>
        <end position="42"/>
    </location>
</feature>
<feature type="helix" evidence="35">
    <location>
        <begin position="43"/>
        <end position="57"/>
    </location>
</feature>
<feature type="helix" evidence="35">
    <location>
        <begin position="69"/>
        <end position="72"/>
    </location>
</feature>
<feature type="helix" evidence="35">
    <location>
        <begin position="80"/>
        <end position="89"/>
    </location>
</feature>
<reference key="1">
    <citation type="journal article" date="1997" name="FEBS Lett.">
        <title>Sequence and characterization of two Arabidopsis thaliana cDNAs isolated by functional complementation of a yeast gln3 gdh1 mutant.</title>
        <authorList>
            <person name="Truong H.-N."/>
            <person name="Caboche M."/>
            <person name="Daniel-Vedele F."/>
        </authorList>
    </citation>
    <scope>NUCLEOTIDE SEQUENCE [MRNA]</scope>
    <scope>TISSUE SPECIFICITY</scope>
    <source>
        <strain>cv. Columbia</strain>
    </source>
</reference>
<reference key="2">
    <citation type="journal article" date="1997" name="Genes Dev.">
        <title>The Arabidopsis GAI gene defines a signaling pathway that negatively regulates gibberellin responses.</title>
        <authorList>
            <person name="Peng J."/>
            <person name="Carol P."/>
            <person name="Richards D.E."/>
            <person name="King K.E."/>
            <person name="Cowling R.J."/>
            <person name="Murphy G.P."/>
            <person name="Harberd N.P."/>
        </authorList>
    </citation>
    <scope>NUCLEOTIDE SEQUENCE [GENOMIC DNA]</scope>
    <scope>FUNCTION</scope>
    <scope>MUTAGENESIS OF 28-ASP--ALA-44</scope>
    <source>
        <strain>cv. Landsberg erecta</strain>
    </source>
</reference>
<reference key="3">
    <citation type="journal article" date="2000" name="Nature">
        <title>Sequence and analysis of chromosome 1 of the plant Arabidopsis thaliana.</title>
        <authorList>
            <person name="Theologis A."/>
            <person name="Ecker J.R."/>
            <person name="Palm C.J."/>
            <person name="Federspiel N.A."/>
            <person name="Kaul S."/>
            <person name="White O."/>
            <person name="Alonso J."/>
            <person name="Altafi H."/>
            <person name="Araujo R."/>
            <person name="Bowman C.L."/>
            <person name="Brooks S.Y."/>
            <person name="Buehler E."/>
            <person name="Chan A."/>
            <person name="Chao Q."/>
            <person name="Chen H."/>
            <person name="Cheuk R.F."/>
            <person name="Chin C.W."/>
            <person name="Chung M.K."/>
            <person name="Conn L."/>
            <person name="Conway A.B."/>
            <person name="Conway A.R."/>
            <person name="Creasy T.H."/>
            <person name="Dewar K."/>
            <person name="Dunn P."/>
            <person name="Etgu P."/>
            <person name="Feldblyum T.V."/>
            <person name="Feng J.-D."/>
            <person name="Fong B."/>
            <person name="Fujii C.Y."/>
            <person name="Gill J.E."/>
            <person name="Goldsmith A.D."/>
            <person name="Haas B."/>
            <person name="Hansen N.F."/>
            <person name="Hughes B."/>
            <person name="Huizar L."/>
            <person name="Hunter J.L."/>
            <person name="Jenkins J."/>
            <person name="Johnson-Hopson C."/>
            <person name="Khan S."/>
            <person name="Khaykin E."/>
            <person name="Kim C.J."/>
            <person name="Koo H.L."/>
            <person name="Kremenetskaia I."/>
            <person name="Kurtz D.B."/>
            <person name="Kwan A."/>
            <person name="Lam B."/>
            <person name="Langin-Hooper S."/>
            <person name="Lee A."/>
            <person name="Lee J.M."/>
            <person name="Lenz C.A."/>
            <person name="Li J.H."/>
            <person name="Li Y.-P."/>
            <person name="Lin X."/>
            <person name="Liu S.X."/>
            <person name="Liu Z.A."/>
            <person name="Luros J.S."/>
            <person name="Maiti R."/>
            <person name="Marziali A."/>
            <person name="Militscher J."/>
            <person name="Miranda M."/>
            <person name="Nguyen M."/>
            <person name="Nierman W.C."/>
            <person name="Osborne B.I."/>
            <person name="Pai G."/>
            <person name="Peterson J."/>
            <person name="Pham P.K."/>
            <person name="Rizzo M."/>
            <person name="Rooney T."/>
            <person name="Rowley D."/>
            <person name="Sakano H."/>
            <person name="Salzberg S.L."/>
            <person name="Schwartz J.R."/>
            <person name="Shinn P."/>
            <person name="Southwick A.M."/>
            <person name="Sun H."/>
            <person name="Tallon L.J."/>
            <person name="Tambunga G."/>
            <person name="Toriumi M.J."/>
            <person name="Town C.D."/>
            <person name="Utterback T."/>
            <person name="Van Aken S."/>
            <person name="Vaysberg M."/>
            <person name="Vysotskaia V.S."/>
            <person name="Walker M."/>
            <person name="Wu D."/>
            <person name="Yu G."/>
            <person name="Fraser C.M."/>
            <person name="Venter J.C."/>
            <person name="Davis R.W."/>
        </authorList>
    </citation>
    <scope>NUCLEOTIDE SEQUENCE [LARGE SCALE GENOMIC DNA]</scope>
    <source>
        <strain>cv. Columbia</strain>
    </source>
</reference>
<reference key="4">
    <citation type="journal article" date="2017" name="Plant J.">
        <title>Araport11: a complete reannotation of the Arabidopsis thaliana reference genome.</title>
        <authorList>
            <person name="Cheng C.Y."/>
            <person name="Krishnakumar V."/>
            <person name="Chan A.P."/>
            <person name="Thibaud-Nissen F."/>
            <person name="Schobel S."/>
            <person name="Town C.D."/>
        </authorList>
    </citation>
    <scope>GENOME REANNOTATION</scope>
    <source>
        <strain>cv. Columbia</strain>
    </source>
</reference>
<reference key="5">
    <citation type="journal article" date="2003" name="Science">
        <title>Empirical analysis of transcriptional activity in the Arabidopsis genome.</title>
        <authorList>
            <person name="Yamada K."/>
            <person name="Lim J."/>
            <person name="Dale J.M."/>
            <person name="Chen H."/>
            <person name="Shinn P."/>
            <person name="Palm C.J."/>
            <person name="Southwick A.M."/>
            <person name="Wu H.C."/>
            <person name="Kim C.J."/>
            <person name="Nguyen M."/>
            <person name="Pham P.K."/>
            <person name="Cheuk R.F."/>
            <person name="Karlin-Newmann G."/>
            <person name="Liu S.X."/>
            <person name="Lam B."/>
            <person name="Sakano H."/>
            <person name="Wu T."/>
            <person name="Yu G."/>
            <person name="Miranda M."/>
            <person name="Quach H.L."/>
            <person name="Tripp M."/>
            <person name="Chang C.H."/>
            <person name="Lee J.M."/>
            <person name="Toriumi M.J."/>
            <person name="Chan M.M."/>
            <person name="Tang C.C."/>
            <person name="Onodera C.S."/>
            <person name="Deng J.M."/>
            <person name="Akiyama K."/>
            <person name="Ansari Y."/>
            <person name="Arakawa T."/>
            <person name="Banh J."/>
            <person name="Banno F."/>
            <person name="Bowser L."/>
            <person name="Brooks S.Y."/>
            <person name="Carninci P."/>
            <person name="Chao Q."/>
            <person name="Choy N."/>
            <person name="Enju A."/>
            <person name="Goldsmith A.D."/>
            <person name="Gurjal M."/>
            <person name="Hansen N.F."/>
            <person name="Hayashizaki Y."/>
            <person name="Johnson-Hopson C."/>
            <person name="Hsuan V.W."/>
            <person name="Iida K."/>
            <person name="Karnes M."/>
            <person name="Khan S."/>
            <person name="Koesema E."/>
            <person name="Ishida J."/>
            <person name="Jiang P.X."/>
            <person name="Jones T."/>
            <person name="Kawai J."/>
            <person name="Kamiya A."/>
            <person name="Meyers C."/>
            <person name="Nakajima M."/>
            <person name="Narusaka M."/>
            <person name="Seki M."/>
            <person name="Sakurai T."/>
            <person name="Satou M."/>
            <person name="Tamse R."/>
            <person name="Vaysberg M."/>
            <person name="Wallender E.K."/>
            <person name="Wong C."/>
            <person name="Yamamura Y."/>
            <person name="Yuan S."/>
            <person name="Shinozaki K."/>
            <person name="Davis R.W."/>
            <person name="Theologis A."/>
            <person name="Ecker J.R."/>
        </authorList>
    </citation>
    <scope>NUCLEOTIDE SEQUENCE [LARGE SCALE MRNA]</scope>
    <source>
        <strain>cv. Columbia</strain>
    </source>
</reference>
<reference key="6">
    <citation type="journal article" date="1998" name="Plant Cell">
        <title>The Arabidopsis RGA gene encodes a transcriptional regulator repressing the gibberellin signal transduction pathway.</title>
        <authorList>
            <person name="Silverstone A.L."/>
            <person name="Ciampaglio C.N."/>
            <person name="Sun T.-P."/>
        </authorList>
    </citation>
    <scope>TISSUE SPECIFICITY</scope>
</reference>
<reference key="7">
    <citation type="journal article" date="2001" name="Genetics">
        <title>Gibberellins are not required for normal stem growth in Arabidopsis thaliana in the absence of GAI and RGA.</title>
        <authorList>
            <person name="King K.E."/>
            <person name="Moritz T."/>
            <person name="Harberd N.P."/>
        </authorList>
    </citation>
    <scope>FUNCTION</scope>
</reference>
<reference key="8">
    <citation type="journal article" date="2001" name="Genetics">
        <title>Synergistic derepression of gibberellin signaling by removing RGA and GAI function in Arabidopsis thaliana.</title>
        <authorList>
            <person name="Dill A."/>
            <person name="Sun T.-P."/>
        </authorList>
    </citation>
    <scope>FUNCTION</scope>
</reference>
<reference key="9">
    <citation type="journal article" date="2001" name="Plant Cell">
        <title>Expression of Arabidopsis GAI in transgenic rice represses multiple gibberellin responses.</title>
        <authorList>
            <person name="Fu X."/>
            <person name="Sudhakar D."/>
            <person name="Peng J."/>
            <person name="Richards D.E."/>
            <person name="Christou P."/>
            <person name="Harberd N.P."/>
        </authorList>
    </citation>
    <scope>FUNCTION</scope>
</reference>
<reference key="10">
    <citation type="journal article" date="2002" name="Genes Dev.">
        <title>Gibberellin regulates Arabidopsis seed germination via RGL2, a GAI/RGA-like gene whose expression is up-regulated following imbibition.</title>
        <authorList>
            <person name="Lee S."/>
            <person name="Cheng H."/>
            <person name="King K.E."/>
            <person name="Wang W."/>
            <person name="He Y."/>
            <person name="Hussain A."/>
            <person name="Lo J."/>
            <person name="Harberd N.P."/>
            <person name="Peng J."/>
        </authorList>
    </citation>
    <scope>TISSUE SPECIFICITY</scope>
</reference>
<reference key="11">
    <citation type="journal article" date="2002" name="Plant J.">
        <title>Evidence that the Arabidopsis nuclear gibberellin signalling protein GAI is not destabilised by gibberellin.</title>
        <authorList>
            <person name="Fleck B."/>
            <person name="Harberd N.P."/>
        </authorList>
    </citation>
    <scope>SUBCELLULAR LOCATION</scope>
    <scope>LACK OF DEGRADATION</scope>
    <scope>MUTAGENESIS OF 135-LYS--LYS-138 AND 219-ARG--ARG-223</scope>
</reference>
<reference key="12">
    <citation type="journal article" date="2004" name="Development">
        <title>Gibberellin regulates Arabidopsis floral development via suppression of DELLA protein function.</title>
        <authorList>
            <person name="Cheng H."/>
            <person name="Qin L."/>
            <person name="Lee S."/>
            <person name="Fu X."/>
            <person name="Richards D.E."/>
            <person name="Cao D."/>
            <person name="Luo D."/>
            <person name="Harberd N.P."/>
            <person name="Peng J."/>
        </authorList>
    </citation>
    <scope>FUNCTION</scope>
</reference>
<reference key="13">
    <citation type="journal article" date="2004" name="Plant Cell">
        <title>The Arabidopsis F-box protein SLEEPY1 targets gibberellin signaling repressors for gibberellin-induced degradation.</title>
        <authorList>
            <person name="Dill A."/>
            <person name="Thomas S.G."/>
            <person name="Hu J."/>
            <person name="Steber C.M."/>
            <person name="Sun T.-P."/>
        </authorList>
    </citation>
    <scope>INTERACTION WITH GID2</scope>
</reference>
<reference key="14">
    <citation type="journal article" date="2004" name="Plant Cell">
        <title>The Arabidopsis mutant sleepy1gar2-1 protein promotes plant growth by increasing the affinity of the SCFSLY1 E3 ubiquitin ligase for DELLA protein substrates.</title>
        <authorList>
            <person name="Fu X."/>
            <person name="Richards D.E."/>
            <person name="Fleck B."/>
            <person name="Xie D."/>
            <person name="Burton N."/>
            <person name="Harberd N.P."/>
        </authorList>
    </citation>
    <scope>INTERACTION WITH GID2</scope>
</reference>
<reference key="15">
    <citation type="journal article" date="2004" name="Plant Physiol.">
        <title>Della proteins and gibberellin-regulated seed germination and floral development in Arabidopsis.</title>
        <authorList>
            <person name="Tyler L."/>
            <person name="Thomas S.G."/>
            <person name="Hu J."/>
            <person name="Dill A."/>
            <person name="Alonso J.M."/>
            <person name="Ecker J.R."/>
            <person name="Sun T.-P."/>
        </authorList>
    </citation>
    <scope>INTERACTION WITH GID2</scope>
</reference>
<reference key="16">
    <citation type="journal article" date="2004" name="Proc. Natl. Acad. Sci. U.S.A.">
        <title>Floral homeotic genes are targets of gibberellin signaling in flower development.</title>
        <authorList>
            <person name="Yu H."/>
            <person name="Ito T."/>
            <person name="Zhao Y."/>
            <person name="Peng J."/>
            <person name="Kumar P."/>
            <person name="Meyerowitz E.M."/>
        </authorList>
    </citation>
    <scope>FUNCTION</scope>
</reference>
<reference key="17">
    <citation type="journal article" date="2005" name="Planta">
        <title>Loss of function of four DELLA genes leads to light- and gibberellin-independent seed germination in Arabidopsis.</title>
        <authorList>
            <person name="Cao D."/>
            <person name="Hussain A."/>
            <person name="Cheng H."/>
            <person name="Peng J."/>
        </authorList>
    </citation>
    <scope>FUNCTION</scope>
</reference>
<reference key="18">
    <citation type="journal article" date="2006" name="Plant J.">
        <title>Identification and characterization of Arabidopsis gibberellin receptors.</title>
        <authorList>
            <person name="Nakajima M."/>
            <person name="Shimada A."/>
            <person name="Takashi Y."/>
            <person name="Kim Y.C."/>
            <person name="Park S.H."/>
            <person name="Ueguchi-Tanaka M."/>
            <person name="Suzuki H."/>
            <person name="Katoh E."/>
            <person name="Iuchi S."/>
            <person name="Kobayashi M."/>
            <person name="Maeda T."/>
            <person name="Matsuoka M."/>
            <person name="Yamaguchi I."/>
        </authorList>
    </citation>
    <scope>INTERACTION WITH GID1A; GID1B AND GID1C</scope>
</reference>
<reference key="19">
    <citation type="journal article" date="2007" name="Plant Cell">
        <title>Global analysis of della direct targets in early gibberellin signaling in Arabidopsis.</title>
        <authorList>
            <person name="Zentella R."/>
            <person name="Zhang Z.L."/>
            <person name="Park M."/>
            <person name="Thomas S.G."/>
            <person name="Endo A."/>
            <person name="Murase K."/>
            <person name="Fleet C.M."/>
            <person name="Jikumaru Y."/>
            <person name="Nambara E."/>
            <person name="Kamiya Y."/>
            <person name="Sun T.P."/>
        </authorList>
    </citation>
    <scope>FUNCTION</scope>
</reference>
<reference key="20">
    <citation type="journal article" date="2013" name="Curr. Biol.">
        <title>Dynamic regulation of cortical microtubule organization through prefoldin-DELLA interaction.</title>
        <authorList>
            <person name="Locascio A."/>
            <person name="Blazquez M.A."/>
            <person name="Alabadi D."/>
        </authorList>
    </citation>
    <scope>FUNCTION</scope>
    <scope>SUBCELLULAR LOCATION</scope>
    <scope>INTERACTION WITH PFD3 AND PFD5</scope>
</reference>
<reference key="21">
    <citation type="journal article" date="2013" name="Plant Cell">
        <title>DELLA proteins and their interacting RING Finger proteins repress gibberellin responses by binding to the promoters of a subset of gibberellin-responsive genes in Arabidopsis.</title>
        <authorList>
            <person name="Park J."/>
            <person name="Nguyen K.T."/>
            <person name="Park E."/>
            <person name="Jeon J.S."/>
            <person name="Choi G."/>
        </authorList>
    </citation>
    <scope>INTERACTION WITH BOI; BRG1; BRG2 AND BRG3</scope>
    <scope>DISRUPTION PHENOTYPE</scope>
</reference>
<reference key="22">
    <citation type="journal article" date="2013" name="PLoS ONE">
        <title>Arabidopsis TRANSCURVATA1 encodes NUP58, a component of the nucleopore central channel.</title>
        <authorList>
            <person name="Ferrandez-Ayela A."/>
            <person name="Alonso-Peral M.M."/>
            <person name="Sanchez-Garcia A.B."/>
            <person name="Micol-Ponce R."/>
            <person name="Perez-Perez J.M."/>
            <person name="Micol J.L."/>
            <person name="Ponce M.R."/>
        </authorList>
    </citation>
    <scope>INTERACTION WITH NUP58</scope>
</reference>
<reference key="23">
    <citation type="journal article" date="2014" name="Plant Cell">
        <title>Arabidopsis DELLA and two HD-ZIP transcription factors regulate GA signaling in the epidermis through the L1 box cis-element.</title>
        <authorList>
            <person name="Rombola-Caldentey B."/>
            <person name="Rueda-Romero P."/>
            <person name="Iglesias-Fernandez R."/>
            <person name="Carbonero P."/>
            <person name="Onate-Sanchez L."/>
        </authorList>
    </citation>
    <scope>FUNCTION</scope>
    <scope>INDUCTION BY IMBIBITION</scope>
    <scope>INTERACTION WITH PDF2 AND ATML1</scope>
    <source>
        <strain>cv. Columbia</strain>
        <strain>cv. Landsberg erecta</strain>
    </source>
</reference>
<reference key="24">
    <citation type="journal article" date="2014" name="Plant Cell">
        <title>DELLAs function as coactivators of GAI-ASSOCIATED FACTOR1 in regulation of gibberellin homeostasis and signaling in Arabidopsis.</title>
        <authorList>
            <person name="Fukazawa J."/>
            <person name="Teramura H."/>
            <person name="Murakoshi S."/>
            <person name="Nasuno K."/>
            <person name="Nishida N."/>
            <person name="Ito T."/>
            <person name="Yoshida M."/>
            <person name="Kamiya Y."/>
            <person name="Yamaguchi S."/>
            <person name="Takahashi Y."/>
        </authorList>
    </citation>
    <scope>FUNCTION</scope>
    <scope>INTERACTION WITH GAF1/IDD2 AND ENY/IDD1</scope>
    <scope>SUBCELLULAR LOCATION</scope>
    <scope>ACTIVITY REGULATION</scope>
    <source>
        <strain>cv. Columbia</strain>
    </source>
</reference>
<reference key="25">
    <citation type="journal article" date="2014" name="PLoS Genet.">
        <title>Arabidopsis DELLA protein degradation is controlled by a type-one protein phosphatase, TOPP4.</title>
        <authorList>
            <person name="Qin Q."/>
            <person name="Wang W."/>
            <person name="Guo X."/>
            <person name="Yue J."/>
            <person name="Huang Y."/>
            <person name="Xu X."/>
            <person name="Li J."/>
            <person name="Hou S."/>
        </authorList>
    </citation>
    <scope>INTERACTION WITH TOPP4</scope>
</reference>
<reference key="26">
    <citation type="journal article" date="2015" name="Mol. Plant">
        <title>TCP14 and TCP15 mediate the promotion of seed germination by gibberellins in Arabidopsis thaliana.</title>
        <authorList>
            <person name="Resentini F."/>
            <person name="Felipo-Benavent A."/>
            <person name="Colombo L."/>
            <person name="Blazquez M.A."/>
            <person name="Alabadi D."/>
            <person name="Masiero S."/>
        </authorList>
    </citation>
    <scope>INTERACTION WITH TCP14 AND TCP15</scope>
</reference>
<reference key="27">
    <citation type="journal article" date="2016" name="Curr. Plant Biol.">
        <title>A protein-protein interaction network linking the energy-sensor kinase SnRK1 to multiple signaling pathways in Arabidopsis thaliana.</title>
        <authorList>
            <person name="Nietzsche M."/>
            <person name="Landgraf R."/>
            <person name="Tohge T."/>
            <person name="Boernke F."/>
        </authorList>
    </citation>
    <scope>INTERACTION WITH FLZ5</scope>
</reference>
<reference key="28">
    <citation type="journal article" date="2008" name="Nature">
        <title>Gibberellin-induced DELLA recognition by the gibberellin receptor GID1.</title>
        <authorList>
            <person name="Murase K."/>
            <person name="Hirano Y."/>
            <person name="Sun T.P."/>
            <person name="Hakoshima T."/>
        </authorList>
    </citation>
    <scope>X-RAY CRYSTALLOGRAPHY (1.80 ANGSTROMS) OF 11-113 IN COMPLEX WITH GID1A AND GIBBERELLIN</scope>
</reference>